<dbReference type="EC" id="3.1.-.-" evidence="1"/>
<dbReference type="EMBL" id="CP000849">
    <property type="protein sequence ID" value="ABV78468.1"/>
    <property type="molecule type" value="Genomic_DNA"/>
</dbReference>
<dbReference type="RefSeq" id="WP_012151506.1">
    <property type="nucleotide sequence ID" value="NC_009883.1"/>
</dbReference>
<dbReference type="SMR" id="A8GUH2"/>
<dbReference type="KEGG" id="rbo:A1I_00310"/>
<dbReference type="HOGENOM" id="CLU_106710_0_0_5"/>
<dbReference type="GO" id="GO:0005737">
    <property type="term" value="C:cytoplasm"/>
    <property type="evidence" value="ECO:0007669"/>
    <property type="project" value="UniProtKB-SubCell"/>
</dbReference>
<dbReference type="GO" id="GO:0004222">
    <property type="term" value="F:metalloendopeptidase activity"/>
    <property type="evidence" value="ECO:0007669"/>
    <property type="project" value="InterPro"/>
</dbReference>
<dbReference type="GO" id="GO:0004521">
    <property type="term" value="F:RNA endonuclease activity"/>
    <property type="evidence" value="ECO:0007669"/>
    <property type="project" value="UniProtKB-UniRule"/>
</dbReference>
<dbReference type="GO" id="GO:0008270">
    <property type="term" value="F:zinc ion binding"/>
    <property type="evidence" value="ECO:0007669"/>
    <property type="project" value="UniProtKB-UniRule"/>
</dbReference>
<dbReference type="GO" id="GO:0006364">
    <property type="term" value="P:rRNA processing"/>
    <property type="evidence" value="ECO:0007669"/>
    <property type="project" value="UniProtKB-UniRule"/>
</dbReference>
<dbReference type="Gene3D" id="3.40.390.30">
    <property type="entry name" value="Metalloproteases ('zincins'), catalytic domain"/>
    <property type="match status" value="1"/>
</dbReference>
<dbReference type="HAMAP" id="MF_00009">
    <property type="entry name" value="Endoribonucl_YbeY"/>
    <property type="match status" value="1"/>
</dbReference>
<dbReference type="InterPro" id="IPR023091">
    <property type="entry name" value="MetalPrtase_cat_dom_sf_prd"/>
</dbReference>
<dbReference type="InterPro" id="IPR002036">
    <property type="entry name" value="YbeY"/>
</dbReference>
<dbReference type="InterPro" id="IPR020549">
    <property type="entry name" value="YbeY_CS"/>
</dbReference>
<dbReference type="NCBIfam" id="TIGR00043">
    <property type="entry name" value="rRNA maturation RNase YbeY"/>
    <property type="match status" value="1"/>
</dbReference>
<dbReference type="PANTHER" id="PTHR46986">
    <property type="entry name" value="ENDORIBONUCLEASE YBEY, CHLOROPLASTIC"/>
    <property type="match status" value="1"/>
</dbReference>
<dbReference type="PANTHER" id="PTHR46986:SF1">
    <property type="entry name" value="ENDORIBONUCLEASE YBEY, CHLOROPLASTIC"/>
    <property type="match status" value="1"/>
</dbReference>
<dbReference type="Pfam" id="PF02130">
    <property type="entry name" value="YbeY"/>
    <property type="match status" value="1"/>
</dbReference>
<dbReference type="SUPFAM" id="SSF55486">
    <property type="entry name" value="Metalloproteases ('zincins'), catalytic domain"/>
    <property type="match status" value="1"/>
</dbReference>
<dbReference type="PROSITE" id="PS01306">
    <property type="entry name" value="UPF0054"/>
    <property type="match status" value="1"/>
</dbReference>
<protein>
    <recommendedName>
        <fullName evidence="1">Endoribonuclease YbeY</fullName>
        <ecNumber evidence="1">3.1.-.-</ecNumber>
    </recommendedName>
</protein>
<feature type="chain" id="PRO_1000000737" description="Endoribonuclease YbeY">
    <location>
        <begin position="1"/>
        <end position="183"/>
    </location>
</feature>
<feature type="binding site" evidence="1">
    <location>
        <position position="143"/>
    </location>
    <ligand>
        <name>Zn(2+)</name>
        <dbReference type="ChEBI" id="CHEBI:29105"/>
        <note>catalytic</note>
    </ligand>
</feature>
<feature type="binding site" evidence="1">
    <location>
        <position position="147"/>
    </location>
    <ligand>
        <name>Zn(2+)</name>
        <dbReference type="ChEBI" id="CHEBI:29105"/>
        <note>catalytic</note>
    </ligand>
</feature>
<feature type="binding site" evidence="1">
    <location>
        <position position="153"/>
    </location>
    <ligand>
        <name>Zn(2+)</name>
        <dbReference type="ChEBI" id="CHEBI:29105"/>
        <note>catalytic</note>
    </ligand>
</feature>
<evidence type="ECO:0000255" key="1">
    <source>
        <dbReference type="HAMAP-Rule" id="MF_00009"/>
    </source>
</evidence>
<comment type="function">
    <text evidence="1">Single strand-specific metallo-endoribonuclease involved in late-stage 70S ribosome quality control and in maturation of the 3' terminus of the 16S rRNA.</text>
</comment>
<comment type="cofactor">
    <cofactor evidence="1">
        <name>Zn(2+)</name>
        <dbReference type="ChEBI" id="CHEBI:29105"/>
    </cofactor>
    <text evidence="1">Binds 1 zinc ion.</text>
</comment>
<comment type="subcellular location">
    <subcellularLocation>
        <location evidence="1">Cytoplasm</location>
    </subcellularLocation>
</comment>
<comment type="similarity">
    <text evidence="1">Belongs to the endoribonuclease YbeY family.</text>
</comment>
<gene>
    <name evidence="1" type="primary">ybeY</name>
    <name type="ordered locus">A1I_00310</name>
</gene>
<organism>
    <name type="scientific">Rickettsia bellii (strain OSU 85-389)</name>
    <dbReference type="NCBI Taxonomy" id="391896"/>
    <lineage>
        <taxon>Bacteria</taxon>
        <taxon>Pseudomonadati</taxon>
        <taxon>Pseudomonadota</taxon>
        <taxon>Alphaproteobacteria</taxon>
        <taxon>Rickettsiales</taxon>
        <taxon>Rickettsiaceae</taxon>
        <taxon>Rickettsieae</taxon>
        <taxon>Rickettsia</taxon>
        <taxon>belli group</taxon>
    </lineage>
</organism>
<reference key="1">
    <citation type="submission" date="2007-09" db="EMBL/GenBank/DDBJ databases">
        <title>Complete genome sequencing of Rickettsia bellii.</title>
        <authorList>
            <person name="Madan A."/>
            <person name="Lee H."/>
            <person name="Madan A."/>
            <person name="Yoon J.-G."/>
            <person name="Ryu G.-Y."/>
            <person name="Dasch G."/>
            <person name="Ereemeva M."/>
        </authorList>
    </citation>
    <scope>NUCLEOTIDE SEQUENCE [LARGE SCALE GENOMIC DNA]</scope>
    <source>
        <strain>OSU 85-389</strain>
    </source>
</reference>
<proteinExistence type="inferred from homology"/>
<keyword id="KW-0963">Cytoplasm</keyword>
<keyword id="KW-0255">Endonuclease</keyword>
<keyword id="KW-0378">Hydrolase</keyword>
<keyword id="KW-0479">Metal-binding</keyword>
<keyword id="KW-0540">Nuclease</keyword>
<keyword id="KW-0690">Ribosome biogenesis</keyword>
<keyword id="KW-0698">rRNA processing</keyword>
<keyword id="KW-0862">Zinc</keyword>
<accession>A8GUH2</accession>
<name>YBEY_RICB8</name>
<sequence length="183" mass="21502">MINVEIIKNYSKWREHKQINKALIKKITQKTLSQFDNFSEIKQFELSILLTNNEEILTLNKQFRNIEKATNVLSFPANELNWQDLRFSGNEIASSNKPIILENLGDSDYMHLGDIAFCYDVIYNESYEQQKTFENHFIHLLIHSILHLIGFDHQNDTETKIMENLEIEILAHFGISSPYLLIK</sequence>